<name>GAG_HTL1L</name>
<feature type="initiator methionine" description="Removed; by host" evidence="2">
    <location>
        <position position="1"/>
    </location>
</feature>
<feature type="chain" id="PRO_0000259774" description="Gag polyprotein">
    <location>
        <begin position="2"/>
        <end position="429"/>
    </location>
</feature>
<feature type="chain" id="PRO_0000259775" description="Matrix protein p19">
    <location>
        <begin position="2"/>
        <end position="130"/>
    </location>
</feature>
<feature type="chain" id="PRO_0000259776" description="Capsid protein p24">
    <location>
        <begin position="131"/>
        <end position="344"/>
    </location>
</feature>
<feature type="chain" id="PRO_0000259777" description="Nucleocapsid protein p15-gag">
    <location>
        <begin position="345"/>
        <end position="429"/>
    </location>
</feature>
<feature type="zinc finger region" description="CCHC-type 1" evidence="3">
    <location>
        <begin position="355"/>
        <end position="372"/>
    </location>
</feature>
<feature type="zinc finger region" description="CCHC-type 2" evidence="3">
    <location>
        <begin position="378"/>
        <end position="395"/>
    </location>
</feature>
<feature type="region of interest" description="Disordered" evidence="4">
    <location>
        <begin position="93"/>
        <end position="143"/>
    </location>
</feature>
<feature type="short sequence motif" description="PPXY motif" evidence="1">
    <location>
        <begin position="118"/>
        <end position="121"/>
    </location>
</feature>
<feature type="short sequence motif" description="PTAP/PSAP motif" evidence="1">
    <location>
        <begin position="124"/>
        <end position="127"/>
    </location>
</feature>
<feature type="site" description="Cleavage; by viral protease" evidence="1">
    <location>
        <begin position="130"/>
        <end position="131"/>
    </location>
</feature>
<feature type="site" description="Cleavage; by viral protease" evidence="1">
    <location>
        <begin position="344"/>
        <end position="345"/>
    </location>
</feature>
<feature type="modified residue" description="Phosphoserine; by host MAPK1" evidence="1">
    <location>
        <position position="105"/>
    </location>
</feature>
<feature type="lipid moiety-binding region" description="N-myristoyl glycine; by host" evidence="2">
    <location>
        <position position="2"/>
    </location>
</feature>
<feature type="disulfide bond" description="Interchain" evidence="1">
    <location>
        <position position="61"/>
    </location>
</feature>
<accession>P0C209</accession>
<evidence type="ECO:0000250" key="1">
    <source>
        <dbReference type="UniProtKB" id="P03345"/>
    </source>
</evidence>
<evidence type="ECO:0000255" key="2"/>
<evidence type="ECO:0000255" key="3">
    <source>
        <dbReference type="PROSITE-ProRule" id="PRU00047"/>
    </source>
</evidence>
<evidence type="ECO:0000256" key="4">
    <source>
        <dbReference type="SAM" id="MobiDB-lite"/>
    </source>
</evidence>
<evidence type="ECO:0000305" key="5"/>
<organism>
    <name type="scientific">Human T-cell leukemia virus 1 (isolate Melanesia mel5 subtype C)</name>
    <name type="common">HTLV-1</name>
    <dbReference type="NCBI Taxonomy" id="402046"/>
    <lineage>
        <taxon>Viruses</taxon>
        <taxon>Riboviria</taxon>
        <taxon>Pararnavirae</taxon>
        <taxon>Artverviricota</taxon>
        <taxon>Revtraviricetes</taxon>
        <taxon>Ortervirales</taxon>
        <taxon>Retroviridae</taxon>
        <taxon>Orthoretrovirinae</taxon>
        <taxon>Deltaretrovirus</taxon>
        <taxon>Primate T-lymphotropic virus 1</taxon>
    </lineage>
</organism>
<reference key="1">
    <citation type="journal article" date="1993" name="J. Virol.">
        <title>Complete nucleotide sequence of a highly divergent human T-cell leukemia (lymphotropic) virus type I (HTLV-I) variant from melanesia: genetic and phylogenetic relationship to HTLV-I strains from other geographical regions.</title>
        <authorList>
            <person name="Gessain A."/>
            <person name="Boeri E."/>
            <person name="Yanagihara R."/>
            <person name="Gallo R.C."/>
            <person name="Franchini G."/>
        </authorList>
    </citation>
    <scope>NUCLEOTIDE SEQUENCE [GENOMIC DNA]</scope>
</reference>
<gene>
    <name type="primary">gag</name>
</gene>
<comment type="function">
    <molecule>Gag polyprotein</molecule>
    <text evidence="1">The matrix domain targets Gag, Gag-Pro and Gag-Pro-Pol polyproteins to the plasma membrane via a multipartite membrane binding signal, that includes its myristoylated N-terminus.</text>
</comment>
<comment type="function">
    <molecule>Matrix protein p19</molecule>
    <text evidence="1">Matrix protein.</text>
</comment>
<comment type="function">
    <molecule>Capsid protein p24</molecule>
    <text evidence="1">Forms the spherical core of the virus that encapsulates the genomic RNA-nucleocapsid complex.</text>
</comment>
<comment type="function">
    <molecule>Nucleocapsid protein p15-gag</molecule>
    <text evidence="1">Binds strongly to viral nucleic acids and promote their aggregation. Also destabilizes the nucleic acids duplexes via highly structured zinc-binding motifs.</text>
</comment>
<comment type="subunit">
    <molecule>Gag polyprotein</molecule>
    <text evidence="1">Homodimer; the homodimers are part of the immature particles. Interacts with human TSG101 and NEDD4; these interactions are essential for budding and release of viral particles.</text>
</comment>
<comment type="subunit">
    <molecule>Matrix protein p19</molecule>
    <text evidence="1">Homodimer; further assembles as homohexamers.</text>
</comment>
<comment type="subcellular location">
    <molecule>Matrix protein p19</molecule>
    <subcellularLocation>
        <location evidence="1">Virion</location>
    </subcellularLocation>
</comment>
<comment type="subcellular location">
    <molecule>Capsid protein p24</molecule>
    <subcellularLocation>
        <location evidence="1">Virion</location>
    </subcellularLocation>
</comment>
<comment type="subcellular location">
    <molecule>Nucleocapsid protein p15-gag</molecule>
    <subcellularLocation>
        <location evidence="1">Virion</location>
    </subcellularLocation>
</comment>
<comment type="alternative products">
    <event type="ribosomal frameshifting"/>
    <isoform>
        <id>P0C209-1</id>
        <name>Gag polyprotein</name>
        <sequence type="displayed"/>
    </isoform>
    <isoform>
        <id>P0C210-1</id>
        <name>Gag-Pro polyprotein</name>
        <sequence type="external"/>
    </isoform>
    <isoform>
        <id>P0C211-1</id>
        <name>Gag-Pol polyprotein</name>
        <sequence type="external"/>
    </isoform>
    <text evidence="5">This strategy of translation probably allows the virus to modulate the quantity of each viral protein.</text>
</comment>
<comment type="domain">
    <molecule>Gag polyprotein</molecule>
    <text evidence="1">Late-budding domains (L domains) are short sequence motifs essential for viral particle release. They can occur individually or in close proximity within structural proteins. They interacts with sorting cellular proteins of the multivesicular body (MVB) pathway. Most of these proteins are class E vacuolar protein sorting factors belonging to ESCRT-I, ESCRT-II or ESCRT-III complexes. Matrix protein p19 contains two L domains: a PTAP/PSAP motif which interacts with the UEV domain of TSG101, and a PPXY motif which binds to the WW domains of the ubiquitin ligase NEDD4.</text>
</comment>
<comment type="domain">
    <molecule>Capsid protein p24</molecule>
    <text evidence="1">The capsid protein N-terminus seems to be involved in Gag-Gag interactions.</text>
</comment>
<comment type="domain">
    <molecule>Nucleocapsid protein p15-gag</molecule>
    <text evidence="1">The C-terminus is acidic.</text>
</comment>
<comment type="PTM">
    <molecule>Gag polyprotein</molecule>
    <text evidence="1">Specific enzymatic cleavages by the viral protease yield mature proteins. The polyprotein is cleaved during and after budding, this process is termed maturation.</text>
</comment>
<comment type="PTM">
    <molecule>Matrix protein p19</molecule>
    <text evidence="1">Phosphorylation of the matrix protein p19 by MAPK1 seems to play a role in budding.</text>
</comment>
<comment type="PTM">
    <molecule>Gag polyprotein</molecule>
    <text evidence="1">Ubiquitinated by host NEDD4.</text>
</comment>
<comment type="PTM">
    <molecule>Gag polyprotein</molecule>
    <text evidence="1">Myristoylated. Myristoylation of the matrix (MA) domain mediates the transport and binding of Gag polyproteins to the host plasma membrane and is required for the assembly of viral particles.</text>
</comment>
<comment type="miscellaneous">
    <text evidence="5">HTLV-1 lineages are divided in four clades, A (Cosmopolitan), B (Central African group), C (Melanesian group) and D (New Central African group).</text>
</comment>
<comment type="miscellaneous">
    <molecule>Isoform Gag polyprotein</molecule>
    <text evidence="1">Produced by conventional translation.</text>
</comment>
<keyword id="KW-0167">Capsid protein</keyword>
<keyword id="KW-1015">Disulfide bond</keyword>
<keyword id="KW-0945">Host-virus interaction</keyword>
<keyword id="KW-0449">Lipoprotein</keyword>
<keyword id="KW-0479">Metal-binding</keyword>
<keyword id="KW-0519">Myristate</keyword>
<keyword id="KW-0597">Phosphoprotein</keyword>
<keyword id="KW-0677">Repeat</keyword>
<keyword id="KW-0688">Ribosomal frameshifting</keyword>
<keyword id="KW-0832">Ubl conjugation</keyword>
<keyword id="KW-0543">Viral nucleoprotein</keyword>
<keyword id="KW-0946">Virion</keyword>
<keyword id="KW-0862">Zinc</keyword>
<keyword id="KW-0863">Zinc-finger</keyword>
<dbReference type="EMBL" id="L02534">
    <property type="status" value="NOT_ANNOTATED_CDS"/>
    <property type="molecule type" value="Genomic_DNA"/>
</dbReference>
<dbReference type="BMRB" id="P0C209"/>
<dbReference type="SMR" id="P0C209"/>
<dbReference type="GO" id="GO:0019013">
    <property type="term" value="C:viral nucleocapsid"/>
    <property type="evidence" value="ECO:0007669"/>
    <property type="project" value="UniProtKB-KW"/>
</dbReference>
<dbReference type="GO" id="GO:0003676">
    <property type="term" value="F:nucleic acid binding"/>
    <property type="evidence" value="ECO:0007669"/>
    <property type="project" value="InterPro"/>
</dbReference>
<dbReference type="GO" id="GO:0005198">
    <property type="term" value="F:structural molecule activity"/>
    <property type="evidence" value="ECO:0007669"/>
    <property type="project" value="InterPro"/>
</dbReference>
<dbReference type="GO" id="GO:0008270">
    <property type="term" value="F:zinc ion binding"/>
    <property type="evidence" value="ECO:0007669"/>
    <property type="project" value="UniProtKB-KW"/>
</dbReference>
<dbReference type="GO" id="GO:0075523">
    <property type="term" value="P:viral translational frameshifting"/>
    <property type="evidence" value="ECO:0007669"/>
    <property type="project" value="UniProtKB-KW"/>
</dbReference>
<dbReference type="Gene3D" id="1.10.1200.30">
    <property type="match status" value="1"/>
</dbReference>
<dbReference type="Gene3D" id="1.10.185.10">
    <property type="entry name" value="Delta-retroviral matrix"/>
    <property type="match status" value="1"/>
</dbReference>
<dbReference type="Gene3D" id="1.10.375.10">
    <property type="entry name" value="Human Immunodeficiency Virus Type 1 Capsid Protein"/>
    <property type="match status" value="1"/>
</dbReference>
<dbReference type="Gene3D" id="4.10.60.10">
    <property type="entry name" value="Zinc finger, CCHC-type"/>
    <property type="match status" value="1"/>
</dbReference>
<dbReference type="InterPro" id="IPR003139">
    <property type="entry name" value="D_retro_matrix"/>
</dbReference>
<dbReference type="InterPro" id="IPR045345">
    <property type="entry name" value="Gag_p24_C"/>
</dbReference>
<dbReference type="InterPro" id="IPR050195">
    <property type="entry name" value="Primate_lentivir_Gag_pol-like"/>
</dbReference>
<dbReference type="InterPro" id="IPR008916">
    <property type="entry name" value="Retrov_capsid_C"/>
</dbReference>
<dbReference type="InterPro" id="IPR008919">
    <property type="entry name" value="Retrov_capsid_N"/>
</dbReference>
<dbReference type="InterPro" id="IPR010999">
    <property type="entry name" value="Retrovr_matrix"/>
</dbReference>
<dbReference type="InterPro" id="IPR001878">
    <property type="entry name" value="Znf_CCHC"/>
</dbReference>
<dbReference type="InterPro" id="IPR036875">
    <property type="entry name" value="Znf_CCHC_sf"/>
</dbReference>
<dbReference type="PANTHER" id="PTHR40389">
    <property type="entry name" value="ENDOGENOUS RETROVIRUS GROUP K MEMBER 24 GAG POLYPROTEIN-RELATED"/>
    <property type="match status" value="1"/>
</dbReference>
<dbReference type="PANTHER" id="PTHR40389:SF3">
    <property type="entry name" value="IGE-BINDING PROTEIN"/>
    <property type="match status" value="1"/>
</dbReference>
<dbReference type="Pfam" id="PF02228">
    <property type="entry name" value="Gag_p19"/>
    <property type="match status" value="1"/>
</dbReference>
<dbReference type="Pfam" id="PF00607">
    <property type="entry name" value="Gag_p24"/>
    <property type="match status" value="1"/>
</dbReference>
<dbReference type="Pfam" id="PF19317">
    <property type="entry name" value="Gag_p24_C"/>
    <property type="match status" value="1"/>
</dbReference>
<dbReference type="Pfam" id="PF00098">
    <property type="entry name" value="zf-CCHC"/>
    <property type="match status" value="1"/>
</dbReference>
<dbReference type="SMART" id="SM00343">
    <property type="entry name" value="ZnF_C2HC"/>
    <property type="match status" value="2"/>
</dbReference>
<dbReference type="SUPFAM" id="SSF47836">
    <property type="entry name" value="Retroviral matrix proteins"/>
    <property type="match status" value="1"/>
</dbReference>
<dbReference type="SUPFAM" id="SSF47353">
    <property type="entry name" value="Retrovirus capsid dimerization domain-like"/>
    <property type="match status" value="1"/>
</dbReference>
<dbReference type="SUPFAM" id="SSF47943">
    <property type="entry name" value="Retrovirus capsid protein, N-terminal core domain"/>
    <property type="match status" value="1"/>
</dbReference>
<dbReference type="SUPFAM" id="SSF57756">
    <property type="entry name" value="Retrovirus zinc finger-like domains"/>
    <property type="match status" value="1"/>
</dbReference>
<dbReference type="PROSITE" id="PS50158">
    <property type="entry name" value="ZF_CCHC"/>
    <property type="match status" value="1"/>
</dbReference>
<sequence length="429" mass="47541">MGQIFPRSANPIPRPPRGLATHHWLNFLQAAYRLEPGPSSYDFHQLKTVLKMALETPVWMCPINYSLLASLLPKGYPGQVNEILQVLIQTQTQIPSHPAPPPPSSPTHDPPDSDPQIPPPYVEPTAPQVLPVMHPHGVPPTHRPWQMKDLQAIKQEVSQAAPGSPQFMQTIRLAVQQFDPTAKDLQDLLQYLCSSLVASLHHQQLDSLISEAETRGITGYNPLAGPLRVQANNPQQQGLRREYQQLWLTAFAALPGSAKDPSWASILQGLEEPYHTFVERLNVALDNGLPEGTPKDPILRSLAYSNANKECQKLLQARGHTNSPLGDMLRACQAWTPRDKTKVLVVQPKKPPPNQPCFRCGKAGHWSRDCAQPRPPPGPCPLCQDPTHWKRDCPRLKPAIPEPEPEEDALLLDLPADIPHPKNSIGGEV</sequence>
<organismHost>
    <name type="scientific">Homo sapiens</name>
    <name type="common">Human</name>
    <dbReference type="NCBI Taxonomy" id="9606"/>
</organismHost>
<proteinExistence type="inferred from homology"/>
<protein>
    <recommendedName>
        <fullName>Gag polyprotein</fullName>
    </recommendedName>
    <alternativeName>
        <fullName>Pr53Gag</fullName>
    </alternativeName>
    <component>
        <recommendedName>
            <fullName>Matrix protein p19</fullName>
            <shortName>MA</shortName>
        </recommendedName>
    </component>
    <component>
        <recommendedName>
            <fullName>Capsid protein p24</fullName>
            <shortName>CA</shortName>
        </recommendedName>
    </component>
    <component>
        <recommendedName>
            <fullName>Nucleocapsid protein p15-gag</fullName>
            <shortName>NC-gag</shortName>
        </recommendedName>
    </component>
</protein>